<organism>
    <name type="scientific">Burkholderia pseudomallei (strain 1106a)</name>
    <dbReference type="NCBI Taxonomy" id="357348"/>
    <lineage>
        <taxon>Bacteria</taxon>
        <taxon>Pseudomonadati</taxon>
        <taxon>Pseudomonadota</taxon>
        <taxon>Betaproteobacteria</taxon>
        <taxon>Burkholderiales</taxon>
        <taxon>Burkholderiaceae</taxon>
        <taxon>Burkholderia</taxon>
        <taxon>pseudomallei group</taxon>
    </lineage>
</organism>
<sequence length="473" mass="52201">MNAAVIDSHSAQDYVVADIALAGWGRKELNIAETEMPGLVQIRDEYKAQQPLKGARIAGSLHMTIQTGVLIETLKALGADVRWASCNIFSTQDHAAAAIVEAGTPVFAFKGESLDEYWEFSHRIFEWPNGEFANMILDDGGDATLLLILGSKAEKDRSVIARPTNEEEVALFKSIERHLEIDGSWYSKRLAHIKGVTEETTTGVHRLYQMEKDGRLPFPAFNVNDSVTKSKFDNLYGCRESLVDGIKRATDVMIAGKIAVVAGYGDVGKGCAQSLRGLGATVWVTEIDPICALQAAMEGYRVVTMEYAADKADIFVTATGNYHVINHDHMKAMRHNAIVCNIGHFDSEIDVASTRQYQWENIKPQVDHIIFPDGKRVILLAEGRLVNLGCATGHPSFVMSNSFTNQTLAQIELFTRGGEYANKVYVLPKHLDEKVARLHLARIGAQLSELSDDQAAYIGVSKAGPFKPDHYRY</sequence>
<accession>A3P0L8</accession>
<keyword id="KW-0963">Cytoplasm</keyword>
<keyword id="KW-0378">Hydrolase</keyword>
<keyword id="KW-0520">NAD</keyword>
<keyword id="KW-0554">One-carbon metabolism</keyword>
<name>SAHH_BURP0</name>
<protein>
    <recommendedName>
        <fullName evidence="1">Adenosylhomocysteinase</fullName>
        <ecNumber evidence="1">3.13.2.1</ecNumber>
    </recommendedName>
    <alternativeName>
        <fullName evidence="1">S-adenosyl-L-homocysteine hydrolase</fullName>
        <shortName evidence="1">AdoHcyase</shortName>
    </alternativeName>
</protein>
<feature type="chain" id="PRO_1000024717" description="Adenosylhomocysteinase">
    <location>
        <begin position="1"/>
        <end position="473"/>
    </location>
</feature>
<feature type="binding site" evidence="1">
    <location>
        <position position="64"/>
    </location>
    <ligand>
        <name>substrate</name>
    </ligand>
</feature>
<feature type="binding site" evidence="1">
    <location>
        <position position="139"/>
    </location>
    <ligand>
        <name>substrate</name>
    </ligand>
</feature>
<feature type="binding site" evidence="1">
    <location>
        <position position="199"/>
    </location>
    <ligand>
        <name>substrate</name>
    </ligand>
</feature>
<feature type="binding site" evidence="1">
    <location>
        <begin position="200"/>
        <end position="202"/>
    </location>
    <ligand>
        <name>NAD(+)</name>
        <dbReference type="ChEBI" id="CHEBI:57540"/>
    </ligand>
</feature>
<feature type="binding site" evidence="1">
    <location>
        <position position="229"/>
    </location>
    <ligand>
        <name>substrate</name>
    </ligand>
</feature>
<feature type="binding site" evidence="1">
    <location>
        <position position="233"/>
    </location>
    <ligand>
        <name>substrate</name>
    </ligand>
</feature>
<feature type="binding site" evidence="1">
    <location>
        <position position="234"/>
    </location>
    <ligand>
        <name>NAD(+)</name>
        <dbReference type="ChEBI" id="CHEBI:57540"/>
    </ligand>
</feature>
<feature type="binding site" evidence="1">
    <location>
        <begin position="263"/>
        <end position="268"/>
    </location>
    <ligand>
        <name>NAD(+)</name>
        <dbReference type="ChEBI" id="CHEBI:57540"/>
    </ligand>
</feature>
<feature type="binding site" evidence="1">
    <location>
        <position position="286"/>
    </location>
    <ligand>
        <name>NAD(+)</name>
        <dbReference type="ChEBI" id="CHEBI:57540"/>
    </ligand>
</feature>
<feature type="binding site" evidence="1">
    <location>
        <position position="321"/>
    </location>
    <ligand>
        <name>NAD(+)</name>
        <dbReference type="ChEBI" id="CHEBI:57540"/>
    </ligand>
</feature>
<feature type="binding site" evidence="1">
    <location>
        <begin position="342"/>
        <end position="344"/>
    </location>
    <ligand>
        <name>NAD(+)</name>
        <dbReference type="ChEBI" id="CHEBI:57540"/>
    </ligand>
</feature>
<feature type="binding site" evidence="1">
    <location>
        <position position="387"/>
    </location>
    <ligand>
        <name>NAD(+)</name>
        <dbReference type="ChEBI" id="CHEBI:57540"/>
    </ligand>
</feature>
<evidence type="ECO:0000255" key="1">
    <source>
        <dbReference type="HAMAP-Rule" id="MF_00563"/>
    </source>
</evidence>
<gene>
    <name evidence="1" type="primary">ahcY</name>
    <name type="ordered locus">BURPS1106A_3919</name>
</gene>
<reference key="1">
    <citation type="journal article" date="2010" name="Genome Biol. Evol.">
        <title>Continuing evolution of Burkholderia mallei through genome reduction and large-scale rearrangements.</title>
        <authorList>
            <person name="Losada L."/>
            <person name="Ronning C.M."/>
            <person name="DeShazer D."/>
            <person name="Woods D."/>
            <person name="Fedorova N."/>
            <person name="Kim H.S."/>
            <person name="Shabalina S.A."/>
            <person name="Pearson T.R."/>
            <person name="Brinkac L."/>
            <person name="Tan P."/>
            <person name="Nandi T."/>
            <person name="Crabtree J."/>
            <person name="Badger J."/>
            <person name="Beckstrom-Sternberg S."/>
            <person name="Saqib M."/>
            <person name="Schutzer S.E."/>
            <person name="Keim P."/>
            <person name="Nierman W.C."/>
        </authorList>
    </citation>
    <scope>NUCLEOTIDE SEQUENCE [LARGE SCALE GENOMIC DNA]</scope>
    <source>
        <strain>1106a</strain>
    </source>
</reference>
<dbReference type="EC" id="3.13.2.1" evidence="1"/>
<dbReference type="EMBL" id="CP000572">
    <property type="protein sequence ID" value="ABN89944.1"/>
    <property type="molecule type" value="Genomic_DNA"/>
</dbReference>
<dbReference type="RefSeq" id="WP_004198634.1">
    <property type="nucleotide sequence ID" value="NC_009076.1"/>
</dbReference>
<dbReference type="SMR" id="A3P0L8"/>
<dbReference type="GeneID" id="93061911"/>
<dbReference type="KEGG" id="bpl:BURPS1106A_3919"/>
<dbReference type="HOGENOM" id="CLU_025194_2_1_4"/>
<dbReference type="UniPathway" id="UPA00314">
    <property type="reaction ID" value="UER00076"/>
</dbReference>
<dbReference type="Proteomes" id="UP000006738">
    <property type="component" value="Chromosome I"/>
</dbReference>
<dbReference type="GO" id="GO:0005829">
    <property type="term" value="C:cytosol"/>
    <property type="evidence" value="ECO:0007669"/>
    <property type="project" value="TreeGrafter"/>
</dbReference>
<dbReference type="GO" id="GO:0004013">
    <property type="term" value="F:adenosylhomocysteinase activity"/>
    <property type="evidence" value="ECO:0007669"/>
    <property type="project" value="UniProtKB-UniRule"/>
</dbReference>
<dbReference type="GO" id="GO:0071269">
    <property type="term" value="P:L-homocysteine biosynthetic process"/>
    <property type="evidence" value="ECO:0007669"/>
    <property type="project" value="UniProtKB-UniRule"/>
</dbReference>
<dbReference type="GO" id="GO:0006730">
    <property type="term" value="P:one-carbon metabolic process"/>
    <property type="evidence" value="ECO:0007669"/>
    <property type="project" value="UniProtKB-KW"/>
</dbReference>
<dbReference type="GO" id="GO:0033353">
    <property type="term" value="P:S-adenosylmethionine cycle"/>
    <property type="evidence" value="ECO:0007669"/>
    <property type="project" value="TreeGrafter"/>
</dbReference>
<dbReference type="CDD" id="cd00401">
    <property type="entry name" value="SAHH"/>
    <property type="match status" value="1"/>
</dbReference>
<dbReference type="FunFam" id="3.40.50.720:FF:000004">
    <property type="entry name" value="Adenosylhomocysteinase"/>
    <property type="match status" value="1"/>
</dbReference>
<dbReference type="Gene3D" id="3.40.50.1480">
    <property type="entry name" value="Adenosylhomocysteinase-like"/>
    <property type="match status" value="1"/>
</dbReference>
<dbReference type="Gene3D" id="3.40.50.720">
    <property type="entry name" value="NAD(P)-binding Rossmann-like Domain"/>
    <property type="match status" value="1"/>
</dbReference>
<dbReference type="HAMAP" id="MF_00563">
    <property type="entry name" value="AdoHcyase"/>
    <property type="match status" value="1"/>
</dbReference>
<dbReference type="InterPro" id="IPR042172">
    <property type="entry name" value="Adenosylhomocyst_ase-like_sf"/>
</dbReference>
<dbReference type="InterPro" id="IPR000043">
    <property type="entry name" value="Adenosylhomocysteinase-like"/>
</dbReference>
<dbReference type="InterPro" id="IPR015878">
    <property type="entry name" value="Ado_hCys_hydrolase_NAD-bd"/>
</dbReference>
<dbReference type="InterPro" id="IPR036291">
    <property type="entry name" value="NAD(P)-bd_dom_sf"/>
</dbReference>
<dbReference type="InterPro" id="IPR020082">
    <property type="entry name" value="S-Ado-L-homoCys_hydrolase_CS"/>
</dbReference>
<dbReference type="NCBIfam" id="TIGR00936">
    <property type="entry name" value="ahcY"/>
    <property type="match status" value="1"/>
</dbReference>
<dbReference type="NCBIfam" id="NF004005">
    <property type="entry name" value="PRK05476.2-3"/>
    <property type="match status" value="1"/>
</dbReference>
<dbReference type="PANTHER" id="PTHR23420">
    <property type="entry name" value="ADENOSYLHOMOCYSTEINASE"/>
    <property type="match status" value="1"/>
</dbReference>
<dbReference type="PANTHER" id="PTHR23420:SF0">
    <property type="entry name" value="ADENOSYLHOMOCYSTEINASE"/>
    <property type="match status" value="1"/>
</dbReference>
<dbReference type="Pfam" id="PF05221">
    <property type="entry name" value="AdoHcyase"/>
    <property type="match status" value="1"/>
</dbReference>
<dbReference type="Pfam" id="PF00670">
    <property type="entry name" value="AdoHcyase_NAD"/>
    <property type="match status" value="1"/>
</dbReference>
<dbReference type="PIRSF" id="PIRSF001109">
    <property type="entry name" value="Ad_hcy_hydrolase"/>
    <property type="match status" value="1"/>
</dbReference>
<dbReference type="SMART" id="SM00996">
    <property type="entry name" value="AdoHcyase"/>
    <property type="match status" value="1"/>
</dbReference>
<dbReference type="SMART" id="SM00997">
    <property type="entry name" value="AdoHcyase_NAD"/>
    <property type="match status" value="1"/>
</dbReference>
<dbReference type="SUPFAM" id="SSF52283">
    <property type="entry name" value="Formate/glycerate dehydrogenase catalytic domain-like"/>
    <property type="match status" value="1"/>
</dbReference>
<dbReference type="SUPFAM" id="SSF51735">
    <property type="entry name" value="NAD(P)-binding Rossmann-fold domains"/>
    <property type="match status" value="1"/>
</dbReference>
<dbReference type="PROSITE" id="PS00738">
    <property type="entry name" value="ADOHCYASE_1"/>
    <property type="match status" value="1"/>
</dbReference>
<dbReference type="PROSITE" id="PS00739">
    <property type="entry name" value="ADOHCYASE_2"/>
    <property type="match status" value="1"/>
</dbReference>
<comment type="function">
    <text evidence="1">May play a key role in the regulation of the intracellular concentration of adenosylhomocysteine.</text>
</comment>
<comment type="catalytic activity">
    <reaction evidence="1">
        <text>S-adenosyl-L-homocysteine + H2O = L-homocysteine + adenosine</text>
        <dbReference type="Rhea" id="RHEA:21708"/>
        <dbReference type="ChEBI" id="CHEBI:15377"/>
        <dbReference type="ChEBI" id="CHEBI:16335"/>
        <dbReference type="ChEBI" id="CHEBI:57856"/>
        <dbReference type="ChEBI" id="CHEBI:58199"/>
        <dbReference type="EC" id="3.13.2.1"/>
    </reaction>
</comment>
<comment type="cofactor">
    <cofactor evidence="1">
        <name>NAD(+)</name>
        <dbReference type="ChEBI" id="CHEBI:57540"/>
    </cofactor>
    <text evidence="1">Binds 1 NAD(+) per subunit.</text>
</comment>
<comment type="pathway">
    <text evidence="1">Amino-acid biosynthesis; L-homocysteine biosynthesis; L-homocysteine from S-adenosyl-L-homocysteine: step 1/1.</text>
</comment>
<comment type="subcellular location">
    <subcellularLocation>
        <location evidence="1">Cytoplasm</location>
    </subcellularLocation>
</comment>
<comment type="similarity">
    <text evidence="1">Belongs to the adenosylhomocysteinase family.</text>
</comment>
<proteinExistence type="inferred from homology"/>